<proteinExistence type="inferred from homology"/>
<sequence length="88" mass="9761">MLNTKFDELMEFPCAFPFKVVGDAHEALTDRVVAVVQRHAPGDYSPTVKASSKGSYYSVTIRVTVTSKDHIETLYTELAGIEGVRRVL</sequence>
<feature type="chain" id="PRO_1000061895" description="UPF0250 protein Shewana3_0990">
    <location>
        <begin position="1"/>
        <end position="88"/>
    </location>
</feature>
<organism>
    <name type="scientific">Shewanella sp. (strain ANA-3)</name>
    <dbReference type="NCBI Taxonomy" id="94122"/>
    <lineage>
        <taxon>Bacteria</taxon>
        <taxon>Pseudomonadati</taxon>
        <taxon>Pseudomonadota</taxon>
        <taxon>Gammaproteobacteria</taxon>
        <taxon>Alteromonadales</taxon>
        <taxon>Shewanellaceae</taxon>
        <taxon>Shewanella</taxon>
    </lineage>
</organism>
<accession>A0KTV6</accession>
<reference key="1">
    <citation type="submission" date="2006-09" db="EMBL/GenBank/DDBJ databases">
        <title>Complete sequence of chromosome 1 of Shewanella sp. ANA-3.</title>
        <authorList>
            <person name="Copeland A."/>
            <person name="Lucas S."/>
            <person name="Lapidus A."/>
            <person name="Barry K."/>
            <person name="Detter J.C."/>
            <person name="Glavina del Rio T."/>
            <person name="Hammon N."/>
            <person name="Israni S."/>
            <person name="Dalin E."/>
            <person name="Tice H."/>
            <person name="Pitluck S."/>
            <person name="Chertkov O."/>
            <person name="Brettin T."/>
            <person name="Bruce D."/>
            <person name="Han C."/>
            <person name="Tapia R."/>
            <person name="Gilna P."/>
            <person name="Schmutz J."/>
            <person name="Larimer F."/>
            <person name="Land M."/>
            <person name="Hauser L."/>
            <person name="Kyrpides N."/>
            <person name="Kim E."/>
            <person name="Newman D."/>
            <person name="Salticov C."/>
            <person name="Konstantinidis K."/>
            <person name="Klappenback J."/>
            <person name="Tiedje J."/>
            <person name="Richardson P."/>
        </authorList>
    </citation>
    <scope>NUCLEOTIDE SEQUENCE [LARGE SCALE GENOMIC DNA]</scope>
    <source>
        <strain>ANA-3</strain>
    </source>
</reference>
<dbReference type="EMBL" id="CP000469">
    <property type="protein sequence ID" value="ABK47225.1"/>
    <property type="molecule type" value="Genomic_DNA"/>
</dbReference>
<dbReference type="SMR" id="A0KTV6"/>
<dbReference type="STRING" id="94122.Shewana3_0990"/>
<dbReference type="KEGG" id="shn:Shewana3_0990"/>
<dbReference type="eggNOG" id="COG2921">
    <property type="taxonomic scope" value="Bacteria"/>
</dbReference>
<dbReference type="HOGENOM" id="CLU_161438_2_1_6"/>
<dbReference type="OrthoDB" id="9793424at2"/>
<dbReference type="Proteomes" id="UP000002589">
    <property type="component" value="Chromosome"/>
</dbReference>
<dbReference type="GO" id="GO:0005829">
    <property type="term" value="C:cytosol"/>
    <property type="evidence" value="ECO:0007669"/>
    <property type="project" value="TreeGrafter"/>
</dbReference>
<dbReference type="Gene3D" id="3.30.70.260">
    <property type="match status" value="1"/>
</dbReference>
<dbReference type="HAMAP" id="MF_00659">
    <property type="entry name" value="UPF0250"/>
    <property type="match status" value="1"/>
</dbReference>
<dbReference type="InterPro" id="IPR007454">
    <property type="entry name" value="UPF0250_YbeD-like"/>
</dbReference>
<dbReference type="InterPro" id="IPR027471">
    <property type="entry name" value="YbeD-like_sf"/>
</dbReference>
<dbReference type="NCBIfam" id="NF003447">
    <property type="entry name" value="PRK04998.1"/>
    <property type="match status" value="1"/>
</dbReference>
<dbReference type="PANTHER" id="PTHR38036">
    <property type="entry name" value="UPF0250 PROTEIN YBED"/>
    <property type="match status" value="1"/>
</dbReference>
<dbReference type="PANTHER" id="PTHR38036:SF1">
    <property type="entry name" value="UPF0250 PROTEIN YBED"/>
    <property type="match status" value="1"/>
</dbReference>
<dbReference type="Pfam" id="PF04359">
    <property type="entry name" value="DUF493"/>
    <property type="match status" value="1"/>
</dbReference>
<dbReference type="SUPFAM" id="SSF117991">
    <property type="entry name" value="YbeD/HP0495-like"/>
    <property type="match status" value="1"/>
</dbReference>
<protein>
    <recommendedName>
        <fullName evidence="1">UPF0250 protein Shewana3_0990</fullName>
    </recommendedName>
</protein>
<comment type="similarity">
    <text evidence="1">Belongs to the UPF0250 family.</text>
</comment>
<gene>
    <name type="ordered locus">Shewana3_0990</name>
</gene>
<evidence type="ECO:0000255" key="1">
    <source>
        <dbReference type="HAMAP-Rule" id="MF_00659"/>
    </source>
</evidence>
<name>Y990_SHESA</name>